<accession>P03472</accession>
<accession>Q84070</accession>
<evidence type="ECO:0000255" key="1">
    <source>
        <dbReference type="HAMAP-Rule" id="MF_04071"/>
    </source>
</evidence>
<evidence type="ECO:0000269" key="2">
    <source>
    </source>
</evidence>
<evidence type="ECO:0000269" key="3">
    <source>
    </source>
</evidence>
<evidence type="ECO:0000269" key="4">
    <source>
    </source>
</evidence>
<evidence type="ECO:0000269" key="5">
    <source>
    </source>
</evidence>
<evidence type="ECO:0007829" key="6">
    <source>
        <dbReference type="PDB" id="1INY"/>
    </source>
</evidence>
<evidence type="ECO:0007829" key="7">
    <source>
        <dbReference type="PDB" id="1NCA"/>
    </source>
</evidence>
<evidence type="ECO:0007829" key="8">
    <source>
        <dbReference type="PDB" id="1NCB"/>
    </source>
</evidence>
<evidence type="ECO:0007829" key="9">
    <source>
        <dbReference type="PDB" id="1NCC"/>
    </source>
</evidence>
<evidence type="ECO:0007829" key="10">
    <source>
        <dbReference type="PDB" id="2QWC"/>
    </source>
</evidence>
<evidence type="ECO:0007829" key="11">
    <source>
        <dbReference type="PDB" id="6HFC"/>
    </source>
</evidence>
<name>NRAM_I75A5</name>
<organismHost>
    <name type="scientific">Aves</name>
    <dbReference type="NCBI Taxonomy" id="8782"/>
</organismHost>
<gene>
    <name evidence="1" type="primary">NA</name>
</gene>
<protein>
    <recommendedName>
        <fullName evidence="1">Neuraminidase</fullName>
        <ecNumber evidence="1">3.2.1.18</ecNumber>
    </recommendedName>
</protein>
<feature type="chain" id="PRO_0000078721" description="Neuraminidase">
    <location>
        <begin position="1"/>
        <end position="470"/>
    </location>
</feature>
<feature type="topological domain" description="Intravirion" evidence="1">
    <location>
        <begin position="1"/>
        <end position="14"/>
    </location>
</feature>
<feature type="transmembrane region" description="Helical" evidence="1">
    <location>
        <begin position="15"/>
        <end position="35"/>
    </location>
</feature>
<feature type="topological domain" description="Virion surface" evidence="1">
    <location>
        <begin position="36"/>
        <end position="470"/>
    </location>
</feature>
<feature type="region of interest" description="Involved in apical transport and lipid raft association" evidence="1">
    <location>
        <begin position="11"/>
        <end position="33"/>
    </location>
</feature>
<feature type="region of interest" description="Hypervariable stalk region" evidence="1">
    <location>
        <begin position="36"/>
        <end position="89"/>
    </location>
</feature>
<feature type="region of interest" description="Head of neuraminidase" evidence="1">
    <location>
        <begin position="92"/>
        <end position="470"/>
    </location>
</feature>
<feature type="active site" description="Proton donor/acceptor" evidence="1">
    <location>
        <position position="152"/>
    </location>
</feature>
<feature type="active site" description="Nucleophile" evidence="1">
    <location>
        <position position="406"/>
    </location>
</feature>
<feature type="binding site" evidence="1">
    <location>
        <position position="119"/>
    </location>
    <ligand>
        <name>substrate</name>
    </ligand>
</feature>
<feature type="binding site" evidence="1">
    <location>
        <position position="153"/>
    </location>
    <ligand>
        <name>substrate</name>
    </ligand>
</feature>
<feature type="binding site" evidence="1">
    <location>
        <begin position="278"/>
        <end position="279"/>
    </location>
    <ligand>
        <name>substrate</name>
    </ligand>
</feature>
<feature type="binding site" evidence="1">
    <location>
        <position position="294"/>
    </location>
    <ligand>
        <name>substrate</name>
    </ligand>
</feature>
<feature type="binding site" evidence="1 2 3 4 5">
    <location>
        <position position="295"/>
    </location>
    <ligand>
        <name>Ca(2+)</name>
        <dbReference type="ChEBI" id="CHEBI:29108"/>
    </ligand>
</feature>
<feature type="binding site" evidence="1 2 3 4 5">
    <location>
        <position position="299"/>
    </location>
    <ligand>
        <name>Ca(2+)</name>
        <dbReference type="ChEBI" id="CHEBI:29108"/>
    </ligand>
</feature>
<feature type="binding site" evidence="1 2 3 4 5">
    <location>
        <position position="326"/>
    </location>
    <ligand>
        <name>Ca(2+)</name>
        <dbReference type="ChEBI" id="CHEBI:29108"/>
    </ligand>
</feature>
<feature type="binding site" evidence="1 2 3 4 5">
    <location>
        <position position="348"/>
    </location>
    <ligand>
        <name>Ca(2+)</name>
        <dbReference type="ChEBI" id="CHEBI:29108"/>
    </ligand>
</feature>
<feature type="binding site" evidence="1">
    <location>
        <position position="372"/>
    </location>
    <ligand>
        <name>substrate</name>
    </ligand>
</feature>
<feature type="glycosylation site" description="N-linked (GlcNAc...) asparagine; by host" evidence="1">
    <location>
        <position position="42"/>
    </location>
</feature>
<feature type="glycosylation site" description="N-linked (GlcNAc...) asparagine; by host" evidence="1">
    <location>
        <position position="52"/>
    </location>
</feature>
<feature type="glycosylation site" description="N-linked (GlcNAc...) asparagine; by host" evidence="1">
    <location>
        <position position="63"/>
    </location>
</feature>
<feature type="glycosylation site" description="N-linked (GlcNAc...) asparagine; by host" evidence="1">
    <location>
        <position position="66"/>
    </location>
</feature>
<feature type="glycosylation site" description="N-linked (GlcNAc...) asparagine; by host" evidence="1 2 3 5">
    <location>
        <position position="87"/>
    </location>
</feature>
<feature type="glycosylation site" description="N-linked (GlcNAc...) asparagine; by host" evidence="1 2 3 5">
    <location>
        <position position="147"/>
    </location>
</feature>
<feature type="glycosylation site" description="N-linked (GlcNAc...) asparagine; by host" evidence="1 2 3 5">
    <location>
        <position position="202"/>
    </location>
</feature>
<feature type="disulfide bond" evidence="1">
    <location>
        <begin position="93"/>
        <end position="419"/>
    </location>
</feature>
<feature type="disulfide bond" evidence="1">
    <location>
        <begin position="125"/>
        <end position="130"/>
    </location>
</feature>
<feature type="disulfide bond">
    <location>
        <begin position="177"/>
        <end position="195"/>
    </location>
</feature>
<feature type="disulfide bond" evidence="1">
    <location>
        <begin position="185"/>
        <end position="232"/>
    </location>
</feature>
<feature type="disulfide bond" evidence="1">
    <location>
        <begin position="234"/>
        <end position="239"/>
    </location>
</feature>
<feature type="disulfide bond" evidence="1">
    <location>
        <begin position="280"/>
        <end position="293"/>
    </location>
</feature>
<feature type="disulfide bond" evidence="1">
    <location>
        <begin position="282"/>
        <end position="291"/>
    </location>
</feature>
<feature type="disulfide bond" evidence="1">
    <location>
        <begin position="320"/>
        <end position="338"/>
    </location>
</feature>
<feature type="disulfide bond" evidence="1">
    <location>
        <begin position="423"/>
        <end position="449"/>
    </location>
</feature>
<feature type="sequence conflict" description="In Ref. 2; AAA43574." ref="2">
    <original>M</original>
    <variation>I</variation>
    <location>
        <position position="377"/>
    </location>
</feature>
<feature type="sequence conflict" description="In Ref. 2; AAA43574." ref="2">
    <original>DK</original>
    <variation>ER</variation>
    <location>
        <begin position="387"/>
        <end position="388"/>
    </location>
</feature>
<feature type="strand" evidence="11">
    <location>
        <begin position="96"/>
        <end position="103"/>
    </location>
</feature>
<feature type="helix" evidence="11">
    <location>
        <begin position="106"/>
        <end position="110"/>
    </location>
</feature>
<feature type="strand" evidence="11">
    <location>
        <begin position="115"/>
        <end position="126"/>
    </location>
</feature>
<feature type="strand" evidence="11">
    <location>
        <begin position="129"/>
        <end position="143"/>
    </location>
</feature>
<feature type="helix" evidence="11">
    <location>
        <begin position="144"/>
        <end position="146"/>
    </location>
</feature>
<feature type="turn" evidence="11">
    <location>
        <begin position="147"/>
        <end position="150"/>
    </location>
</feature>
<feature type="strand" evidence="11">
    <location>
        <begin position="158"/>
        <end position="163"/>
    </location>
</feature>
<feature type="turn" evidence="11">
    <location>
        <begin position="170"/>
        <end position="172"/>
    </location>
</feature>
<feature type="strand" evidence="11">
    <location>
        <begin position="174"/>
        <end position="186"/>
    </location>
</feature>
<feature type="strand" evidence="11">
    <location>
        <begin position="188"/>
        <end position="198"/>
    </location>
</feature>
<feature type="strand" evidence="6">
    <location>
        <begin position="200"/>
        <end position="202"/>
    </location>
</feature>
<feature type="strand" evidence="11">
    <location>
        <begin position="204"/>
        <end position="209"/>
    </location>
</feature>
<feature type="strand" evidence="11">
    <location>
        <begin position="212"/>
        <end position="218"/>
    </location>
</feature>
<feature type="strand" evidence="11">
    <location>
        <begin position="220"/>
        <end position="223"/>
    </location>
</feature>
<feature type="strand" evidence="8">
    <location>
        <begin position="225"/>
        <end position="227"/>
    </location>
</feature>
<feature type="strand" evidence="9">
    <location>
        <begin position="229"/>
        <end position="231"/>
    </location>
</feature>
<feature type="strand" evidence="11">
    <location>
        <begin position="238"/>
        <end position="246"/>
    </location>
</feature>
<feature type="strand" evidence="11">
    <location>
        <begin position="248"/>
        <end position="250"/>
    </location>
</feature>
<feature type="strand" evidence="11">
    <location>
        <begin position="252"/>
        <end position="260"/>
    </location>
</feature>
<feature type="strand" evidence="11">
    <location>
        <begin position="263"/>
        <end position="269"/>
    </location>
</feature>
<feature type="strand" evidence="11">
    <location>
        <begin position="278"/>
        <end position="285"/>
    </location>
</feature>
<feature type="strand" evidence="11">
    <location>
        <begin position="288"/>
        <end position="294"/>
    </location>
</feature>
<feature type="strand" evidence="10">
    <location>
        <begin position="296"/>
        <end position="298"/>
    </location>
</feature>
<feature type="strand" evidence="11">
    <location>
        <begin position="303"/>
        <end position="308"/>
    </location>
</feature>
<feature type="turn" evidence="11">
    <location>
        <begin position="309"/>
        <end position="312"/>
    </location>
</feature>
<feature type="strand" evidence="11">
    <location>
        <begin position="313"/>
        <end position="318"/>
    </location>
</feature>
<feature type="strand" evidence="11">
    <location>
        <begin position="321"/>
        <end position="323"/>
    </location>
</feature>
<feature type="strand" evidence="11">
    <location>
        <begin position="326"/>
        <end position="328"/>
    </location>
</feature>
<feature type="strand" evidence="11">
    <location>
        <begin position="338"/>
        <end position="340"/>
    </location>
</feature>
<feature type="helix" evidence="7">
    <location>
        <begin position="358"/>
        <end position="360"/>
    </location>
</feature>
<feature type="strand" evidence="11">
    <location>
        <begin position="362"/>
        <end position="365"/>
    </location>
</feature>
<feature type="strand" evidence="11">
    <location>
        <begin position="369"/>
        <end position="379"/>
    </location>
</feature>
<feature type="turn" evidence="11">
    <location>
        <begin position="381"/>
        <end position="385"/>
    </location>
</feature>
<feature type="strand" evidence="11">
    <location>
        <begin position="392"/>
        <end position="403"/>
    </location>
</feature>
<feature type="strand" evidence="11">
    <location>
        <begin position="407"/>
        <end position="410"/>
    </location>
</feature>
<feature type="strand" evidence="11">
    <location>
        <begin position="416"/>
        <end position="420"/>
    </location>
</feature>
<feature type="strand" evidence="11">
    <location>
        <begin position="423"/>
        <end position="431"/>
    </location>
</feature>
<feature type="turn" evidence="11">
    <location>
        <begin position="432"/>
        <end position="434"/>
    </location>
</feature>
<feature type="strand" evidence="11">
    <location>
        <begin position="441"/>
        <end position="453"/>
    </location>
</feature>
<feature type="helix" evidence="11">
    <location>
        <begin position="466"/>
        <end position="469"/>
    </location>
</feature>
<sequence>MNPNQKILCTSATALVIGTIAVLIGITNLGLNIGLHLKPSCNCSHSQPEATNASQTIINNYYNDTNITQISNTNIQVEERAIRDFNNLTKGLCTINSWHIYGKDNAVRIGEDSDVLVTREPYVSCDPDECRFYALSQGTTIRGKHSNGTIHDRSQYRALISWPLSSPPTVYNSRVECIGWSSTSCHDGKTRMSICISGPNNNASAVIWYNRRPVTEINTWARNILRTQESECVCHNGVCPVVFTDGSATGPAETRIYYFKEGKILKWEPLAGTAKHIEECSCYGERAEITCTCRDNWQGSNRPVIRIDPVAMTHTSQYICSPVLTDNPRPNDPTVGKCNDPYPGNNNNGVKGFSYLDGVNTWLGRTISIASRSGYEMLKVPNALTDDKSKPTQGQTIVLNTDWSGYSGSFMDYWAEGECYRACFYVELIRGRPKEDKVWWTSNSIVSMCSSTEFLGQWDWPDGAKIEYFL</sequence>
<comment type="function">
    <text evidence="1">Catalyzes the removal of terminal sialic acid residues from viral and cellular glycoconjugates. Cleaves off the terminal sialic acids on the glycosylated HA during virus budding to facilitate virus release. Additionally helps virus spread through the circulation by further removing sialic acids from the cell surface. These cleavages prevent self-aggregation and ensure the efficient spread of the progeny virus from cell to cell. Otherwise, infection would be limited to one round of replication. Described as a receptor-destroying enzyme because it cleaves a terminal sialic acid from the cellular receptors. May facilitate viral invasion of the upper airways by cleaving the sialic acid moieties on the mucin of the airway epithelial cells. Likely to plays a role in the budding process through its association with lipid rafts during intracellular transport. May additionally display a raft-association independent effect on budding. Plays a role in the determination of host range restriction on replication and virulence. Sialidase activity in late endosome/lysosome traffic seems to enhance virus replication.</text>
</comment>
<comment type="catalytic activity">
    <reaction evidence="1 2">
        <text>Hydrolysis of alpha-(2-&gt;3)-, alpha-(2-&gt;6)-, alpha-(2-&gt;8)- glycosidic linkages of terminal sialic acid residues in oligosaccharides, glycoproteins, glycolipids, colominic acid and synthetic substrates.</text>
        <dbReference type="EC" id="3.2.1.18"/>
    </reaction>
</comment>
<comment type="cofactor">
    <cofactor evidence="1 2 3 4 5">
        <name>Ca(2+)</name>
        <dbReference type="ChEBI" id="CHEBI:29108"/>
    </cofactor>
    <text evidence="2 3 4 5">Binds 1 Ca(2+) ion per subunit.</text>
</comment>
<comment type="activity regulation">
    <text evidence="1 2">Inhibited by the neuraminidase inhibitors zanamivir (Relenza) and oseltamivir (Tamiflu). These drugs interfere with the release of progeny virus from infected cells and are effective against all influenza strains. Resistance to neuraminidase inhibitors is quite rare.</text>
</comment>
<comment type="subunit">
    <text evidence="1 2 3 4 5">Homotetramer.</text>
</comment>
<comment type="subcellular location">
    <subcellularLocation>
        <location evidence="1">Virion membrane</location>
    </subcellularLocation>
    <subcellularLocation>
        <location evidence="1">Host apical cell membrane</location>
        <topology evidence="1">Single-pass type II membrane protein</topology>
    </subcellularLocation>
    <text evidence="1">Preferentially accumulates at the apical plasma membrane in infected polarized epithelial cells, which is the virus assembly site. Uses lipid rafts for cell surface transport and apical sorting. In the virion, forms a mushroom-shaped spike on the surface of the membrane.</text>
</comment>
<comment type="domain">
    <text evidence="1">Intact N-terminus is essential for virion morphogenesis. Possesses two apical sorting signals, one in the ectodomain, which is likely to be a glycan, and the other in the transmembrane domain. The transmembrane domain also plays a role in lipid raft association.</text>
</comment>
<comment type="PTM">
    <text evidence="1 2 3 5">N-glycosylated.</text>
</comment>
<comment type="miscellaneous">
    <text>The influenza A genome consist of 8 RNA segments. Genetic variation of hemagglutinin and/or neuraminidase genes results in the emergence of new influenza strains. The mechanism of variation can be the result of point mutations or the result of genetic reassortment between segments of two different strains.</text>
</comment>
<comment type="similarity">
    <text evidence="1">Belongs to the glycosyl hydrolase 34 family.</text>
</comment>
<dbReference type="EC" id="3.2.1.18" evidence="1"/>
<dbReference type="EMBL" id="M11445">
    <property type="protein sequence ID" value="AAA43353.1"/>
    <property type="molecule type" value="Genomic_RNA"/>
</dbReference>
<dbReference type="EMBL" id="M17813">
    <property type="protein sequence ID" value="AAA43574.1"/>
    <property type="molecule type" value="Genomic_RNA"/>
</dbReference>
<dbReference type="PIR" id="A00884">
    <property type="entry name" value="NMIV9"/>
</dbReference>
<dbReference type="PDB" id="1A14">
    <property type="method" value="X-ray"/>
    <property type="resolution" value="2.50 A"/>
    <property type="chains" value="N=83-470"/>
</dbReference>
<dbReference type="PDB" id="1BJI">
    <property type="method" value="X-ray"/>
    <property type="resolution" value="2.00 A"/>
    <property type="chains" value="A=83-470"/>
</dbReference>
<dbReference type="PDB" id="1F8B">
    <property type="method" value="X-ray"/>
    <property type="resolution" value="1.80 A"/>
    <property type="chains" value="A=83-470"/>
</dbReference>
<dbReference type="PDB" id="1F8C">
    <property type="method" value="X-ray"/>
    <property type="resolution" value="1.70 A"/>
    <property type="chains" value="A=83-470"/>
</dbReference>
<dbReference type="PDB" id="1F8D">
    <property type="method" value="X-ray"/>
    <property type="resolution" value="1.40 A"/>
    <property type="chains" value="A=83-470"/>
</dbReference>
<dbReference type="PDB" id="1F8E">
    <property type="method" value="X-ray"/>
    <property type="resolution" value="1.40 A"/>
    <property type="chains" value="A=83-470"/>
</dbReference>
<dbReference type="PDB" id="1INY">
    <property type="method" value="X-ray"/>
    <property type="resolution" value="2.40 A"/>
    <property type="chains" value="A=83-470"/>
</dbReference>
<dbReference type="PDB" id="1L7F">
    <property type="method" value="X-ray"/>
    <property type="resolution" value="1.80 A"/>
    <property type="chains" value="A=83-470"/>
</dbReference>
<dbReference type="PDB" id="1L7G">
    <property type="method" value="X-ray"/>
    <property type="resolution" value="1.85 A"/>
    <property type="chains" value="A=83-470"/>
</dbReference>
<dbReference type="PDB" id="1L7H">
    <property type="method" value="X-ray"/>
    <property type="resolution" value="1.85 A"/>
    <property type="chains" value="A=83-470"/>
</dbReference>
<dbReference type="PDB" id="1MWE">
    <property type="method" value="X-ray"/>
    <property type="resolution" value="1.70 A"/>
    <property type="chains" value="A=83-470"/>
</dbReference>
<dbReference type="PDB" id="1NCA">
    <property type="method" value="X-ray"/>
    <property type="resolution" value="2.50 A"/>
    <property type="chains" value="N=82-470"/>
</dbReference>
<dbReference type="PDB" id="1NCB">
    <property type="method" value="X-ray"/>
    <property type="resolution" value="2.50 A"/>
    <property type="chains" value="N=82-470"/>
</dbReference>
<dbReference type="PDB" id="1NCC">
    <property type="method" value="X-ray"/>
    <property type="resolution" value="2.50 A"/>
    <property type="chains" value="N=82-470"/>
</dbReference>
<dbReference type="PDB" id="1NMC">
    <property type="method" value="X-ray"/>
    <property type="resolution" value="2.50 A"/>
    <property type="chains" value="A/N=83-470"/>
</dbReference>
<dbReference type="PDB" id="1NNA">
    <property type="method" value="X-ray"/>
    <property type="resolution" value="2.50 A"/>
    <property type="chains" value="A=84-470"/>
</dbReference>
<dbReference type="PDB" id="1NNB">
    <property type="method" value="X-ray"/>
    <property type="resolution" value="2.80 A"/>
    <property type="chains" value="A=84-470"/>
</dbReference>
<dbReference type="PDB" id="1NNC">
    <property type="method" value="X-ray"/>
    <property type="resolution" value="1.80 A"/>
    <property type="chains" value="A=83-470"/>
</dbReference>
<dbReference type="PDB" id="1XOE">
    <property type="method" value="X-ray"/>
    <property type="resolution" value="2.20 A"/>
    <property type="chains" value="A=84-470"/>
</dbReference>
<dbReference type="PDB" id="1XOG">
    <property type="method" value="X-ray"/>
    <property type="resolution" value="2.80 A"/>
    <property type="chains" value="A=84-470"/>
</dbReference>
<dbReference type="PDB" id="2C4A">
    <property type="method" value="X-ray"/>
    <property type="resolution" value="2.15 A"/>
    <property type="chains" value="A=83-470"/>
</dbReference>
<dbReference type="PDB" id="2C4L">
    <property type="method" value="X-ray"/>
    <property type="resolution" value="2.15 A"/>
    <property type="chains" value="A=83-470"/>
</dbReference>
<dbReference type="PDB" id="2QWA">
    <property type="method" value="X-ray"/>
    <property type="resolution" value="1.70 A"/>
    <property type="chains" value="A=83-470"/>
</dbReference>
<dbReference type="PDB" id="2QWB">
    <property type="method" value="X-ray"/>
    <property type="resolution" value="2.00 A"/>
    <property type="chains" value="A=83-470"/>
</dbReference>
<dbReference type="PDB" id="2QWC">
    <property type="method" value="X-ray"/>
    <property type="resolution" value="1.60 A"/>
    <property type="chains" value="A=83-470"/>
</dbReference>
<dbReference type="PDB" id="2QWD">
    <property type="method" value="X-ray"/>
    <property type="resolution" value="2.00 A"/>
    <property type="chains" value="A=83-470"/>
</dbReference>
<dbReference type="PDB" id="2QWE">
    <property type="method" value="X-ray"/>
    <property type="resolution" value="2.00 A"/>
    <property type="chains" value="A=83-470"/>
</dbReference>
<dbReference type="PDB" id="2QWF">
    <property type="method" value="X-ray"/>
    <property type="resolution" value="1.90 A"/>
    <property type="chains" value="A=83-470"/>
</dbReference>
<dbReference type="PDB" id="2QWG">
    <property type="method" value="X-ray"/>
    <property type="resolution" value="1.80 A"/>
    <property type="chains" value="A=83-470"/>
</dbReference>
<dbReference type="PDB" id="2QWH">
    <property type="method" value="X-ray"/>
    <property type="resolution" value="1.80 A"/>
    <property type="chains" value="A=83-470"/>
</dbReference>
<dbReference type="PDB" id="2QWI">
    <property type="method" value="X-ray"/>
    <property type="resolution" value="2.00 A"/>
    <property type="chains" value="A=83-470"/>
</dbReference>
<dbReference type="PDB" id="2QWJ">
    <property type="method" value="X-ray"/>
    <property type="resolution" value="2.00 A"/>
    <property type="chains" value="A=83-470"/>
</dbReference>
<dbReference type="PDB" id="2QWK">
    <property type="method" value="X-ray"/>
    <property type="resolution" value="1.80 A"/>
    <property type="chains" value="A=83-470"/>
</dbReference>
<dbReference type="PDB" id="3NN9">
    <property type="method" value="X-ray"/>
    <property type="resolution" value="2.30 A"/>
    <property type="chains" value="A=83-470"/>
</dbReference>
<dbReference type="PDB" id="3W09">
    <property type="method" value="X-ray"/>
    <property type="resolution" value="2.00 A"/>
    <property type="chains" value="A=83-470"/>
</dbReference>
<dbReference type="PDB" id="4DGR">
    <property type="method" value="X-ray"/>
    <property type="resolution" value="1.55 A"/>
    <property type="chains" value="A=82-470"/>
</dbReference>
<dbReference type="PDB" id="4NN9">
    <property type="method" value="X-ray"/>
    <property type="resolution" value="2.30 A"/>
    <property type="chains" value="A=83-470"/>
</dbReference>
<dbReference type="PDB" id="4WEG">
    <property type="method" value="X-ray"/>
    <property type="resolution" value="2.10 A"/>
    <property type="chains" value="A=83-470"/>
</dbReference>
<dbReference type="PDB" id="5NN9">
    <property type="method" value="X-ray"/>
    <property type="resolution" value="2.30 A"/>
    <property type="chains" value="A=83-470"/>
</dbReference>
<dbReference type="PDB" id="5W26">
    <property type="method" value="X-ray"/>
    <property type="resolution" value="1.90 A"/>
    <property type="chains" value="A=83-470"/>
</dbReference>
<dbReference type="PDB" id="5W2U">
    <property type="method" value="X-ray"/>
    <property type="resolution" value="2.00 A"/>
    <property type="chains" value="A=83-470"/>
</dbReference>
<dbReference type="PDB" id="5W2W">
    <property type="method" value="X-ray"/>
    <property type="resolution" value="1.85 A"/>
    <property type="chains" value="A=83-470"/>
</dbReference>
<dbReference type="PDB" id="5W2Y">
    <property type="method" value="X-ray"/>
    <property type="resolution" value="2.39 A"/>
    <property type="chains" value="A=83-470"/>
</dbReference>
<dbReference type="PDB" id="6CRD">
    <property type="method" value="X-ray"/>
    <property type="resolution" value="2.57 A"/>
    <property type="chains" value="A/B/C/D/E/F/G/H=83-470"/>
</dbReference>
<dbReference type="PDB" id="6D3B">
    <property type="method" value="X-ray"/>
    <property type="resolution" value="1.40 A"/>
    <property type="chains" value="A=82-470"/>
</dbReference>
<dbReference type="PDB" id="6HCX">
    <property type="method" value="X-ray"/>
    <property type="resolution" value="1.30 A"/>
    <property type="chains" value="A=83-470"/>
</dbReference>
<dbReference type="PDB" id="6HEB">
    <property type="method" value="X-ray"/>
    <property type="resolution" value="1.75 A"/>
    <property type="chains" value="A=83-470"/>
</dbReference>
<dbReference type="PDB" id="6HFC">
    <property type="method" value="X-ray"/>
    <property type="resolution" value="1.29 A"/>
    <property type="chains" value="A=83-470"/>
</dbReference>
<dbReference type="PDB" id="6HG0">
    <property type="method" value="X-ray"/>
    <property type="resolution" value="1.30 A"/>
    <property type="chains" value="A=83-470"/>
</dbReference>
<dbReference type="PDB" id="6MCX">
    <property type="method" value="X-ray"/>
    <property type="resolution" value="2.30 A"/>
    <property type="chains" value="A=83-470"/>
</dbReference>
<dbReference type="PDB" id="6NN9">
    <property type="method" value="X-ray"/>
    <property type="resolution" value="2.30 A"/>
    <property type="chains" value="A=83-470"/>
</dbReference>
<dbReference type="PDB" id="7NN9">
    <property type="method" value="X-ray"/>
    <property type="resolution" value="2.00 A"/>
    <property type="chains" value="A=83-470"/>
</dbReference>
<dbReference type="PDBsum" id="1A14"/>
<dbReference type="PDBsum" id="1BJI"/>
<dbReference type="PDBsum" id="1F8B"/>
<dbReference type="PDBsum" id="1F8C"/>
<dbReference type="PDBsum" id="1F8D"/>
<dbReference type="PDBsum" id="1F8E"/>
<dbReference type="PDBsum" id="1INY"/>
<dbReference type="PDBsum" id="1L7F"/>
<dbReference type="PDBsum" id="1L7G"/>
<dbReference type="PDBsum" id="1L7H"/>
<dbReference type="PDBsum" id="1MWE"/>
<dbReference type="PDBsum" id="1NCA"/>
<dbReference type="PDBsum" id="1NCB"/>
<dbReference type="PDBsum" id="1NCC"/>
<dbReference type="PDBsum" id="1NMC"/>
<dbReference type="PDBsum" id="1NNA"/>
<dbReference type="PDBsum" id="1NNB"/>
<dbReference type="PDBsum" id="1NNC"/>
<dbReference type="PDBsum" id="1XOE"/>
<dbReference type="PDBsum" id="1XOG"/>
<dbReference type="PDBsum" id="2C4A"/>
<dbReference type="PDBsum" id="2C4L"/>
<dbReference type="PDBsum" id="2QWA"/>
<dbReference type="PDBsum" id="2QWB"/>
<dbReference type="PDBsum" id="2QWC"/>
<dbReference type="PDBsum" id="2QWD"/>
<dbReference type="PDBsum" id="2QWE"/>
<dbReference type="PDBsum" id="2QWF"/>
<dbReference type="PDBsum" id="2QWG"/>
<dbReference type="PDBsum" id="2QWH"/>
<dbReference type="PDBsum" id="2QWI"/>
<dbReference type="PDBsum" id="2QWJ"/>
<dbReference type="PDBsum" id="2QWK"/>
<dbReference type="PDBsum" id="3NN9"/>
<dbReference type="PDBsum" id="3W09"/>
<dbReference type="PDBsum" id="4DGR"/>
<dbReference type="PDBsum" id="4NN9"/>
<dbReference type="PDBsum" id="4WEG"/>
<dbReference type="PDBsum" id="5NN9"/>
<dbReference type="PDBsum" id="5W26"/>
<dbReference type="PDBsum" id="5W2U"/>
<dbReference type="PDBsum" id="5W2W"/>
<dbReference type="PDBsum" id="5W2Y"/>
<dbReference type="PDBsum" id="6CRD"/>
<dbReference type="PDBsum" id="6D3B"/>
<dbReference type="PDBsum" id="6HCX"/>
<dbReference type="PDBsum" id="6HEB"/>
<dbReference type="PDBsum" id="6HFC"/>
<dbReference type="PDBsum" id="6HG0"/>
<dbReference type="PDBsum" id="6MCX"/>
<dbReference type="PDBsum" id="6NN9"/>
<dbReference type="PDBsum" id="7NN9"/>
<dbReference type="SMR" id="P03472"/>
<dbReference type="BindingDB" id="P03472"/>
<dbReference type="DrugBank" id="DB02529">
    <property type="generic name" value="(2R,4S,5R,6R)-5-Acetamido-4-amino-6-(diethylcarbamoyl)oxane-2-carboxylic acid"/>
</dbReference>
<dbReference type="DrugBank" id="DB03420">
    <property type="generic name" value="2,4-deoxy-4-guanidino-5-N-acetyl-neuraminic acid"/>
</dbReference>
<dbReference type="DrugBank" id="DB03991">
    <property type="generic name" value="2-deoxy-2,3-dehydro-N-acetylneuraminic acid"/>
</dbReference>
<dbReference type="DrugBank" id="DB03503">
    <property type="generic name" value="4-Acetyl-4-guanidino-6-methyl(propyl)carboxamide-4,5-dihydro-2H-pyran-2-carboxylic acid"/>
</dbReference>
<dbReference type="DrugBank" id="DB03257">
    <property type="generic name" value="5-[1-(Acetylamino)-3-Methylbutyl]-2,5-Anhydro-3,4-Dideoxy-4-(Methoxycarbonyl)Pentonic Acid"/>
</dbReference>
<dbReference type="DrugBank" id="DB04227">
    <property type="generic name" value="9-Amino-2-deoxy-2,3-dehydro-n-acetyl-neuraminic acid"/>
</dbReference>
<dbReference type="DrugBank" id="DB03321">
    <property type="generic name" value="Des(carbamimidoyl) zanamivir"/>
</dbReference>
<dbReference type="DrugBank" id="DB03721">
    <property type="generic name" value="N-acetyl-alpha-neuraminic acid"/>
</dbReference>
<dbReference type="DrugBank" id="DB02600">
    <property type="generic name" value="Oseltamivir acid"/>
</dbReference>
<dbReference type="DrugBank" id="DB06614">
    <property type="generic name" value="Peramivir"/>
</dbReference>
<dbReference type="CAZy" id="GH34">
    <property type="family name" value="Glycoside Hydrolase Family 34"/>
</dbReference>
<dbReference type="GlyCosmos" id="P03472">
    <property type="glycosylation" value="7 sites, No reported glycans"/>
</dbReference>
<dbReference type="iPTMnet" id="P03472"/>
<dbReference type="ABCD" id="P03472">
    <property type="antibodies" value="2 sequenced antibodies"/>
</dbReference>
<dbReference type="EvolutionaryTrace" id="P03472"/>
<dbReference type="GO" id="GO:0020002">
    <property type="term" value="C:host cell plasma membrane"/>
    <property type="evidence" value="ECO:0007669"/>
    <property type="project" value="UniProtKB-SubCell"/>
</dbReference>
<dbReference type="GO" id="GO:0016020">
    <property type="term" value="C:membrane"/>
    <property type="evidence" value="ECO:0007669"/>
    <property type="project" value="UniProtKB-UniRule"/>
</dbReference>
<dbReference type="GO" id="GO:0055036">
    <property type="term" value="C:virion membrane"/>
    <property type="evidence" value="ECO:0007669"/>
    <property type="project" value="UniProtKB-SubCell"/>
</dbReference>
<dbReference type="GO" id="GO:0004308">
    <property type="term" value="F:exo-alpha-sialidase activity"/>
    <property type="evidence" value="ECO:0007669"/>
    <property type="project" value="UniProtKB-UniRule"/>
</dbReference>
<dbReference type="GO" id="GO:0046872">
    <property type="term" value="F:metal ion binding"/>
    <property type="evidence" value="ECO:0007669"/>
    <property type="project" value="UniProtKB-UniRule"/>
</dbReference>
<dbReference type="GO" id="GO:0005975">
    <property type="term" value="P:carbohydrate metabolic process"/>
    <property type="evidence" value="ECO:0007669"/>
    <property type="project" value="InterPro"/>
</dbReference>
<dbReference type="GO" id="GO:0046761">
    <property type="term" value="P:viral budding from plasma membrane"/>
    <property type="evidence" value="ECO:0007669"/>
    <property type="project" value="UniProtKB-UniRule"/>
</dbReference>
<dbReference type="CDD" id="cd15483">
    <property type="entry name" value="Influenza_NA"/>
    <property type="match status" value="1"/>
</dbReference>
<dbReference type="Gene3D" id="2.120.10.10">
    <property type="match status" value="1"/>
</dbReference>
<dbReference type="HAMAP" id="MF_04071">
    <property type="entry name" value="INFV_NRAM"/>
    <property type="match status" value="1"/>
</dbReference>
<dbReference type="InterPro" id="IPR001860">
    <property type="entry name" value="Glyco_hydro_34"/>
</dbReference>
<dbReference type="InterPro" id="IPR033654">
    <property type="entry name" value="Sialidase_Influenza_A/B"/>
</dbReference>
<dbReference type="InterPro" id="IPR036278">
    <property type="entry name" value="Sialidase_sf"/>
</dbReference>
<dbReference type="Pfam" id="PF00064">
    <property type="entry name" value="Neur"/>
    <property type="match status" value="1"/>
</dbReference>
<dbReference type="SUPFAM" id="SSF50939">
    <property type="entry name" value="Sialidases"/>
    <property type="match status" value="1"/>
</dbReference>
<organism>
    <name type="scientific">Influenza A virus (strain A/Tern/Australia/G70C/1975 H11N9)</name>
    <dbReference type="NCBI Taxonomy" id="384509"/>
    <lineage>
        <taxon>Viruses</taxon>
        <taxon>Riboviria</taxon>
        <taxon>Orthornavirae</taxon>
        <taxon>Negarnaviricota</taxon>
        <taxon>Polyploviricotina</taxon>
        <taxon>Insthoviricetes</taxon>
        <taxon>Articulavirales</taxon>
        <taxon>Orthomyxoviridae</taxon>
        <taxon>Alphainfluenzavirus</taxon>
        <taxon>Alphainfluenzavirus influenzae</taxon>
        <taxon>Influenza A virus</taxon>
    </lineage>
</organism>
<proteinExistence type="evidence at protein level"/>
<keyword id="KW-0002">3D-structure</keyword>
<keyword id="KW-0106">Calcium</keyword>
<keyword id="KW-1015">Disulfide bond</keyword>
<keyword id="KW-0325">Glycoprotein</keyword>
<keyword id="KW-0326">Glycosidase</keyword>
<keyword id="KW-1032">Host cell membrane</keyword>
<keyword id="KW-1043">Host membrane</keyword>
<keyword id="KW-0378">Hydrolase</keyword>
<keyword id="KW-0472">Membrane</keyword>
<keyword id="KW-0479">Metal-binding</keyword>
<keyword id="KW-0735">Signal-anchor</keyword>
<keyword id="KW-0812">Transmembrane</keyword>
<keyword id="KW-1133">Transmembrane helix</keyword>
<keyword id="KW-0946">Virion</keyword>
<reference key="1">
    <citation type="journal article" date="1985" name="Virology">
        <title>Gene and protein sequence of an influenza neuraminidase with hemagglutinin activity.</title>
        <authorList>
            <person name="Air G.M."/>
            <person name="Ritchie L.R."/>
            <person name="Laver W.G."/>
            <person name="Colman P.M."/>
        </authorList>
    </citation>
    <scope>NUCLEOTIDE SEQUENCE [GENOMIC RNA]</scope>
</reference>
<reference key="2">
    <citation type="journal article" date="1987" name="Virology">
        <title>Distribution of sequence differences in influenza N9 neuraminidase of tern and whale viruses and crystallization of the whale neuraminidase complexed with antibodies.</title>
        <authorList>
            <person name="Air G.M."/>
            <person name="Webster R.G."/>
            <person name="Colman P.M."/>
            <person name="Laver W.G."/>
        </authorList>
    </citation>
    <scope>NUCLEOTIDE SEQUENCE [GENOMIC RNA]</scope>
</reference>
<reference key="3">
    <citation type="journal article" date="2004" name="Virus Res.">
        <title>Assembly and budding of influenza virus.</title>
        <authorList>
            <person name="Nayak D.P."/>
            <person name="Hui E.K."/>
            <person name="Barman S."/>
        </authorList>
    </citation>
    <scope>REVIEW</scope>
</reference>
<reference key="4">
    <citation type="journal article" date="2005" name="N. Engl. J. Med.">
        <title>Neuraminidase inhibitors for influenza.</title>
        <authorList>
            <person name="Moscona A."/>
        </authorList>
    </citation>
    <scope>REVIEW</scope>
</reference>
<reference key="5">
    <citation type="journal article" date="2005" name="Biol. Pharm. Bull.">
        <title>Sialobiology of influenza: molecular mechanism of host range variation of influenza viruses.</title>
        <authorList>
            <person name="Suzuki Y."/>
        </authorList>
    </citation>
    <scope>REVIEW</scope>
</reference>
<reference key="6">
    <citation type="journal article" date="1987" name="Proteins">
        <title>Three-dimensional structure of neuraminidase of subtype N9 from an avian influenza virus.</title>
        <authorList>
            <person name="Baker A.T."/>
            <person name="Varghese J.N."/>
            <person name="Laver W.G."/>
            <person name="Air G.M."/>
            <person name="Colman P.M."/>
        </authorList>
    </citation>
    <scope>X-RAY CRYSTALLOGRAPHY (2.2 ANGSTROMS) OF 83-470</scope>
</reference>
<reference key="7">
    <citation type="journal article" date="1993" name="J. Mol. Biol.">
        <title>Three-dimensional structure of influenza A N9 neuraminidase and its complex with the inhibitor 2-deoxy 2,3-dehydro-N-acetyl neuraminic acid.</title>
        <authorList>
            <person name="Bossart-Whitaker P."/>
            <person name="Carson M."/>
            <person name="Babu Y.S."/>
            <person name="Smith C.D."/>
            <person name="Laver W.G."/>
            <person name="Air G.M."/>
        </authorList>
    </citation>
    <scope>X-RAY CRYSTALLOGRAPHY (2.5 ANGSTROMS) OF 83-470 IN COMPLEX WITH CALCIUM AND SUBSTRATE ANALOG</scope>
    <scope>DISULFIDE BOND</scope>
    <scope>ACTIVE SITE</scope>
    <scope>COFACTOR</scope>
    <scope>SUBUNIT</scope>
</reference>
<reference key="8">
    <citation type="journal article" date="1995" name="Protein Sci.">
        <title>Three-dimensional structure of the complex of 4-guanidino-Neu5Ac2en and influenza virus neuraminidase.</title>
        <authorList>
            <person name="Varghese J.N."/>
            <person name="Epa V.C."/>
            <person name="Colman P.M."/>
        </authorList>
    </citation>
    <scope>X-RAY CRYSTALLOGRAPHY (1.80 ANGSTROMS) OF 83-470 IN COMPLEX WITH CALCIUM AND SUBSTRATE ANALOG</scope>
    <scope>COFACTOR</scope>
    <scope>DISULFIDE BOND</scope>
    <scope>SUBUNIT</scope>
    <scope>GLYCOSYLATION AT ASN-87; ASN-147 AND ASN-202</scope>
</reference>
<reference key="9">
    <citation type="journal article" date="1997" name="Proc. Natl. Acad. Sci. U.S.A.">
        <title>Structural evidence for a second sialic acid binding site in avian influenza virus neuraminidases.</title>
        <authorList>
            <person name="Varghese J.N."/>
            <person name="Colman P.M."/>
            <person name="van Donkelaar A."/>
            <person name="Blick T.J."/>
            <person name="Sahasrabudhe A."/>
            <person name="McKimm-Breschkin J.L."/>
        </authorList>
    </citation>
    <scope>X-RAY CRYSTALLOGRAPHY (1.7 ANGSTROMS) OF 83-470 IN COMPLEX WITH CALCIUM</scope>
    <scope>COFACTOR</scope>
    <scope>ACTIVE SITE</scope>
    <scope>DISULFIDE BOND</scope>
    <scope>GLYCOSYLATION AT ASN-87; ASN-147 AND ASN-202</scope>
</reference>
<reference key="10">
    <citation type="journal article" date="2013" name="Science">
        <title>Mechanism-based covalent neuraminidase inhibitors with broad-spectrum influenza antiviral activity.</title>
        <authorList>
            <person name="Kim J.H."/>
            <person name="Resende R."/>
            <person name="Wennekes T."/>
            <person name="Chen H.M."/>
            <person name="Bance N."/>
            <person name="Buchini S."/>
            <person name="Watts A.G."/>
            <person name="Pilling P."/>
            <person name="Streltsov V.A."/>
            <person name="Petric M."/>
            <person name="Liggins R."/>
            <person name="Barrett S."/>
            <person name="McKimm-Breschkin J.L."/>
            <person name="Niikura M."/>
            <person name="Withers S.G."/>
        </authorList>
    </citation>
    <scope>X-RAY CRYSTALLOGRAPHY (2.00 ANGSTROMS) OF 83-470 IN COMPLEX WITH CALCIUM AND SUBSTRATE ANALOG</scope>
    <scope>CATALYTIC ACTIVITY</scope>
    <scope>ACTIVE SITE</scope>
    <scope>IDENTIFICATION BY MASS SPECTROMETRY</scope>
    <scope>COFACTOR</scope>
    <scope>ACTIVITY REGULATION</scope>
    <scope>DISULFIDE BOND</scope>
    <scope>GLYCOSYLATION AT ASN-87; ASN-147 AND ASN-202</scope>
</reference>